<sequence>MTNRLVLSGTVCRTPLRKVSPSGIPHCQFVLEHRSVQEEAGFHRQAWCQMPVIISGHENQAITHSITVGSAVTVQGFISCHKAKNGLSKMVLHAEQIDLIDSGD</sequence>
<organism>
    <name type="scientific">Enterobacter sp. (strain 638)</name>
    <dbReference type="NCBI Taxonomy" id="399742"/>
    <lineage>
        <taxon>Bacteria</taxon>
        <taxon>Pseudomonadati</taxon>
        <taxon>Pseudomonadota</taxon>
        <taxon>Gammaproteobacteria</taxon>
        <taxon>Enterobacterales</taxon>
        <taxon>Enterobacteriaceae</taxon>
        <taxon>Enterobacter</taxon>
    </lineage>
</organism>
<protein>
    <recommendedName>
        <fullName evidence="1">Replication restart protein PriB</fullName>
    </recommendedName>
</protein>
<comment type="function">
    <text evidence="1">Involved in the restart of stalled replication forks, which reloads the replicative helicase on sites other than the origin of replication; the PriA-PriB pathway is the major replication restart pathway. During primosome assembly it facilitates complex formation between PriA and DnaT on DNA; stabilizes PriA on DNA. Stimulates the DNA unwinding activity of PriA helicase.</text>
</comment>
<comment type="subunit">
    <text evidence="1">Homodimer. Interacts with PriA and DnaT. Component of the replication restart primosome. Primosome assembly occurs via a 'hand-off' mechanism. PriA binds to replication forks, subsequently PriB then DnaT bind; DnaT then displaces ssDNA to generate the helicase loading substrate.</text>
</comment>
<comment type="similarity">
    <text evidence="1">Belongs to the PriB family.</text>
</comment>
<name>PRIB_ENT38</name>
<gene>
    <name evidence="1" type="primary">priB</name>
    <name type="ordered locus">Ent638_0372</name>
</gene>
<accession>A4W5T0</accession>
<keyword id="KW-0235">DNA replication</keyword>
<keyword id="KW-0238">DNA-binding</keyword>
<keyword id="KW-0639">Primosome</keyword>
<reference key="1">
    <citation type="journal article" date="2010" name="PLoS Genet.">
        <title>Genome sequence of the plant growth promoting endophytic bacterium Enterobacter sp. 638.</title>
        <authorList>
            <person name="Taghavi S."/>
            <person name="van der Lelie D."/>
            <person name="Hoffman A."/>
            <person name="Zhang Y.B."/>
            <person name="Walla M.D."/>
            <person name="Vangronsveld J."/>
            <person name="Newman L."/>
            <person name="Monchy S."/>
        </authorList>
    </citation>
    <scope>NUCLEOTIDE SEQUENCE [LARGE SCALE GENOMIC DNA]</scope>
    <source>
        <strain>638</strain>
    </source>
</reference>
<evidence type="ECO:0000255" key="1">
    <source>
        <dbReference type="HAMAP-Rule" id="MF_00720"/>
    </source>
</evidence>
<feature type="chain" id="PRO_1000083279" description="Replication restart protein PriB">
    <location>
        <begin position="1"/>
        <end position="104"/>
    </location>
</feature>
<feature type="domain" description="SSB" evidence="1">
    <location>
        <begin position="1"/>
        <end position="101"/>
    </location>
</feature>
<dbReference type="EMBL" id="CP000653">
    <property type="protein sequence ID" value="ABP59060.1"/>
    <property type="molecule type" value="Genomic_DNA"/>
</dbReference>
<dbReference type="RefSeq" id="WP_006178996.1">
    <property type="nucleotide sequence ID" value="NC_009436.1"/>
</dbReference>
<dbReference type="SMR" id="A4W5T0"/>
<dbReference type="STRING" id="399742.Ent638_0372"/>
<dbReference type="GeneID" id="93307554"/>
<dbReference type="KEGG" id="ent:Ent638_0372"/>
<dbReference type="eggNOG" id="COG2965">
    <property type="taxonomic scope" value="Bacteria"/>
</dbReference>
<dbReference type="HOGENOM" id="CLU_166075_0_0_6"/>
<dbReference type="OrthoDB" id="9180733at2"/>
<dbReference type="Proteomes" id="UP000000230">
    <property type="component" value="Chromosome"/>
</dbReference>
<dbReference type="GO" id="GO:1990077">
    <property type="term" value="C:primosome complex"/>
    <property type="evidence" value="ECO:0007669"/>
    <property type="project" value="UniProtKB-KW"/>
</dbReference>
<dbReference type="GO" id="GO:0003697">
    <property type="term" value="F:single-stranded DNA binding"/>
    <property type="evidence" value="ECO:0007669"/>
    <property type="project" value="UniProtKB-UniRule"/>
</dbReference>
<dbReference type="GO" id="GO:0006269">
    <property type="term" value="P:DNA replication, synthesis of primer"/>
    <property type="evidence" value="ECO:0007669"/>
    <property type="project" value="UniProtKB-KW"/>
</dbReference>
<dbReference type="FunFam" id="2.40.50.140:FF:000077">
    <property type="entry name" value="Primosomal replication protein N"/>
    <property type="match status" value="1"/>
</dbReference>
<dbReference type="Gene3D" id="2.40.50.140">
    <property type="entry name" value="Nucleic acid-binding proteins"/>
    <property type="match status" value="1"/>
</dbReference>
<dbReference type="HAMAP" id="MF_00720">
    <property type="entry name" value="PriB"/>
    <property type="match status" value="1"/>
</dbReference>
<dbReference type="InterPro" id="IPR012340">
    <property type="entry name" value="NA-bd_OB-fold"/>
</dbReference>
<dbReference type="InterPro" id="IPR000424">
    <property type="entry name" value="Primosome_PriB/ssb"/>
</dbReference>
<dbReference type="InterPro" id="IPR023646">
    <property type="entry name" value="Prisomal_replication_PriB"/>
</dbReference>
<dbReference type="NCBIfam" id="TIGR04418">
    <property type="entry name" value="PriB_gamma"/>
    <property type="match status" value="1"/>
</dbReference>
<dbReference type="Pfam" id="PF22657">
    <property type="entry name" value="SSB_1"/>
    <property type="match status" value="1"/>
</dbReference>
<dbReference type="PIRSF" id="PIRSF003135">
    <property type="entry name" value="Primosomal_n"/>
    <property type="match status" value="1"/>
</dbReference>
<dbReference type="SUPFAM" id="SSF50249">
    <property type="entry name" value="Nucleic acid-binding proteins"/>
    <property type="match status" value="1"/>
</dbReference>
<dbReference type="PROSITE" id="PS50935">
    <property type="entry name" value="SSB"/>
    <property type="match status" value="1"/>
</dbReference>
<proteinExistence type="inferred from homology"/>